<evidence type="ECO:0000255" key="1">
    <source>
        <dbReference type="HAMAP-Rule" id="MF_00643"/>
    </source>
</evidence>
<evidence type="ECO:0000269" key="2">
    <source>
    </source>
</evidence>
<evidence type="ECO:0007829" key="3">
    <source>
        <dbReference type="PDB" id="5XNL"/>
    </source>
</evidence>
<organism>
    <name type="scientific">Pisum sativum</name>
    <name type="common">Garden pea</name>
    <name type="synonym">Lathyrus oleraceus</name>
    <dbReference type="NCBI Taxonomy" id="3888"/>
    <lineage>
        <taxon>Eukaryota</taxon>
        <taxon>Viridiplantae</taxon>
        <taxon>Streptophyta</taxon>
        <taxon>Embryophyta</taxon>
        <taxon>Tracheophyta</taxon>
        <taxon>Spermatophyta</taxon>
        <taxon>Magnoliopsida</taxon>
        <taxon>eudicotyledons</taxon>
        <taxon>Gunneridae</taxon>
        <taxon>Pentapetalae</taxon>
        <taxon>rosids</taxon>
        <taxon>fabids</taxon>
        <taxon>Fabales</taxon>
        <taxon>Fabaceae</taxon>
        <taxon>Papilionoideae</taxon>
        <taxon>50 kb inversion clade</taxon>
        <taxon>NPAAA clade</taxon>
        <taxon>Hologalegina</taxon>
        <taxon>IRL clade</taxon>
        <taxon>Fabeae</taxon>
        <taxon>Pisum</taxon>
    </lineage>
</organism>
<proteinExistence type="evidence at protein level"/>
<feature type="chain" id="PRO_0000200436" description="Cytochrome b559 subunit beta">
    <location>
        <begin position="1"/>
        <end position="39"/>
    </location>
</feature>
<feature type="transmembrane region" description="Helical" evidence="1">
    <location>
        <begin position="14"/>
        <end position="30"/>
    </location>
</feature>
<feature type="binding site" description="axial binding residue" evidence="1">
    <location>
        <position position="18"/>
    </location>
    <ligand>
        <name>heme</name>
        <dbReference type="ChEBI" id="CHEBI:30413"/>
        <note>ligand shared with alpha subunit</note>
    </ligand>
    <ligandPart>
        <name>Fe</name>
        <dbReference type="ChEBI" id="CHEBI:18248"/>
    </ligandPart>
</feature>
<feature type="helix" evidence="3">
    <location>
        <begin position="12"/>
        <end position="34"/>
    </location>
</feature>
<sequence length="39" mass="4424">MTIDRTYPIFTVRWLAVHGLAVPTVSFLGSISAMQFIQR</sequence>
<protein>
    <recommendedName>
        <fullName evidence="1">Cytochrome b559 subunit beta</fullName>
    </recommendedName>
    <alternativeName>
        <fullName evidence="1">PSII reaction center subunit VI</fullName>
    </alternativeName>
</protein>
<name>PSBF_PEA</name>
<comment type="function">
    <text evidence="1">This b-type cytochrome is tightly associated with the reaction center of photosystem II (PSII). PSII is a light-driven water:plastoquinone oxidoreductase that uses light energy to abstract electrons from H(2)O, generating O(2) and a proton gradient subsequently used for ATP formation. It consists of a core antenna complex that captures photons, and an electron transfer chain that converts photonic excitation into a charge separation.</text>
</comment>
<comment type="cofactor">
    <cofactor evidence="1">
        <name>heme b</name>
        <dbReference type="ChEBI" id="CHEBI:60344"/>
    </cofactor>
    <text evidence="1">With its partner (PsbE) binds heme. PSII binds additional chlorophylls, carotenoids and specific lipids.</text>
</comment>
<comment type="subunit">
    <text evidence="1">Heterodimer of an alpha subunit and a beta subunit. PSII is composed of 1 copy each of membrane proteins PsbA, PsbB, PsbC, PsbD, PsbE, PsbF, PsbH, PsbI, PsbJ, PsbK, PsbL, PsbM, PsbT, PsbX, PsbY, PsbZ, Psb30/Ycf12, at least 3 peripheral proteins of the oxygen-evolving complex and a large number of cofactors. It forms dimeric complexes.</text>
</comment>
<comment type="subcellular location">
    <subcellularLocation>
        <location evidence="1">Plastid</location>
        <location evidence="1">Chloroplast thylakoid membrane</location>
        <topology evidence="1">Single-pass membrane protein</topology>
    </subcellularLocation>
</comment>
<comment type="mass spectrometry" mass="4394.8" error="0.4" method="Electrospray" evidence="2"/>
<comment type="similarity">
    <text evidence="1">Belongs to the PsbE/PsbF family.</text>
</comment>
<keyword id="KW-0002">3D-structure</keyword>
<keyword id="KW-0150">Chloroplast</keyword>
<keyword id="KW-0249">Electron transport</keyword>
<keyword id="KW-0349">Heme</keyword>
<keyword id="KW-0408">Iron</keyword>
<keyword id="KW-0472">Membrane</keyword>
<keyword id="KW-0479">Metal-binding</keyword>
<keyword id="KW-0602">Photosynthesis</keyword>
<keyword id="KW-0604">Photosystem II</keyword>
<keyword id="KW-0934">Plastid</keyword>
<keyword id="KW-0793">Thylakoid</keyword>
<keyword id="KW-0812">Transmembrane</keyword>
<keyword id="KW-1133">Transmembrane helix</keyword>
<keyword id="KW-0813">Transport</keyword>
<gene>
    <name evidence="1" type="primary">psbF</name>
</gene>
<dbReference type="EMBL" id="X15767">
    <property type="protein sequence ID" value="CAA33773.1"/>
    <property type="molecule type" value="Genomic_DNA"/>
</dbReference>
<dbReference type="EMBL" id="AY007482">
    <property type="protein sequence ID" value="AAG27011.1"/>
    <property type="molecule type" value="Genomic_DNA"/>
</dbReference>
<dbReference type="PIR" id="B48310">
    <property type="entry name" value="B48310"/>
</dbReference>
<dbReference type="RefSeq" id="YP_003587552.1">
    <property type="nucleotide sequence ID" value="NC_014057.1"/>
</dbReference>
<dbReference type="PDB" id="5XNL">
    <property type="method" value="EM"/>
    <property type="resolution" value="2.70 A"/>
    <property type="chains" value="F/f=1-39"/>
</dbReference>
<dbReference type="PDB" id="5XNM">
    <property type="method" value="EM"/>
    <property type="resolution" value="3.20 A"/>
    <property type="chains" value="F/f=1-39"/>
</dbReference>
<dbReference type="PDB" id="6YP7">
    <property type="method" value="EM"/>
    <property type="resolution" value="3.80 A"/>
    <property type="chains" value="F/f=10-39"/>
</dbReference>
<dbReference type="PDBsum" id="5XNL"/>
<dbReference type="PDBsum" id="5XNM"/>
<dbReference type="PDBsum" id="6YP7"/>
<dbReference type="EMDB" id="EMD-10865"/>
<dbReference type="EMDB" id="EMD-6741"/>
<dbReference type="EMDB" id="EMD-6742"/>
<dbReference type="SMR" id="P62096"/>
<dbReference type="GeneID" id="9073100"/>
<dbReference type="GO" id="GO:0009535">
    <property type="term" value="C:chloroplast thylakoid membrane"/>
    <property type="evidence" value="ECO:0007669"/>
    <property type="project" value="UniProtKB-SubCell"/>
</dbReference>
<dbReference type="GO" id="GO:0009539">
    <property type="term" value="C:photosystem II reaction center"/>
    <property type="evidence" value="ECO:0007669"/>
    <property type="project" value="InterPro"/>
</dbReference>
<dbReference type="GO" id="GO:0009055">
    <property type="term" value="F:electron transfer activity"/>
    <property type="evidence" value="ECO:0007669"/>
    <property type="project" value="UniProtKB-UniRule"/>
</dbReference>
<dbReference type="GO" id="GO:0020037">
    <property type="term" value="F:heme binding"/>
    <property type="evidence" value="ECO:0007669"/>
    <property type="project" value="InterPro"/>
</dbReference>
<dbReference type="GO" id="GO:0005506">
    <property type="term" value="F:iron ion binding"/>
    <property type="evidence" value="ECO:0007669"/>
    <property type="project" value="UniProtKB-UniRule"/>
</dbReference>
<dbReference type="GO" id="GO:0009767">
    <property type="term" value="P:photosynthetic electron transport chain"/>
    <property type="evidence" value="ECO:0007669"/>
    <property type="project" value="InterPro"/>
</dbReference>
<dbReference type="HAMAP" id="MF_00643">
    <property type="entry name" value="PSII_PsbF"/>
    <property type="match status" value="1"/>
</dbReference>
<dbReference type="InterPro" id="IPR006241">
    <property type="entry name" value="PSII_cyt_b559_bsu"/>
</dbReference>
<dbReference type="InterPro" id="IPR006216">
    <property type="entry name" value="PSII_cyt_b559_CS"/>
</dbReference>
<dbReference type="InterPro" id="IPR013081">
    <property type="entry name" value="PSII_cyt_b559_N"/>
</dbReference>
<dbReference type="NCBIfam" id="TIGR01333">
    <property type="entry name" value="cyt_b559_beta"/>
    <property type="match status" value="1"/>
</dbReference>
<dbReference type="Pfam" id="PF00283">
    <property type="entry name" value="Cytochrom_B559"/>
    <property type="match status" value="1"/>
</dbReference>
<dbReference type="PIRSF" id="PIRSF000037">
    <property type="entry name" value="PsbF"/>
    <property type="match status" value="1"/>
</dbReference>
<dbReference type="SUPFAM" id="SSF161045">
    <property type="entry name" value="Cytochrome b559 subunits"/>
    <property type="match status" value="1"/>
</dbReference>
<dbReference type="PROSITE" id="PS00537">
    <property type="entry name" value="CYTOCHROME_B559"/>
    <property type="match status" value="1"/>
</dbReference>
<reference key="1">
    <citation type="journal article" date="1989" name="Curr. Genet.">
        <title>Two small open reading frames are co-transcribed with the pea chloroplast genes for the polypeptides of cytochrome b-559.</title>
        <authorList>
            <person name="Willey D.L."/>
            <person name="Gray J.C."/>
        </authorList>
    </citation>
    <scope>NUCLEOTIDE SEQUENCE [GENOMIC DNA]</scope>
</reference>
<reference key="2">
    <citation type="submission" date="2000-02" db="EMBL/GenBank/DDBJ databases">
        <title>Long branches in the seed plants and the root of the angiosperms.</title>
        <authorList>
            <person name="Graham S.W."/>
            <person name="Reeves P.A."/>
            <person name="Burns A."/>
            <person name="Olmstead R.G."/>
        </authorList>
    </citation>
    <scope>NUCLEOTIDE SEQUENCE [GENOMIC DNA]</scope>
</reference>
<reference key="3">
    <citation type="journal article" date="1997" name="J. Biol. Chem.">
        <title>Purification and determination of intact molecular mass by electrospray ionization mass spectrometry of the photosystem II reaction center subunits.</title>
        <authorList>
            <person name="Sharma J."/>
            <person name="Panico M."/>
            <person name="Barber J."/>
            <person name="Morris H.R."/>
        </authorList>
    </citation>
    <scope>MASS SPECTROMETRY</scope>
</reference>
<accession>P62096</accession>
<accession>P05172</accession>
<accession>Q7HIU4</accession>
<geneLocation type="chloroplast"/>